<accession>P66803</accession>
<accession>Q99SE5</accession>
<evidence type="ECO:0000255" key="1">
    <source>
        <dbReference type="HAMAP-Rule" id="MF_00051"/>
    </source>
</evidence>
<dbReference type="EC" id="2.1.2.1" evidence="1"/>
<dbReference type="EMBL" id="BA000017">
    <property type="protein sequence ID" value="BAB58275.1"/>
    <property type="molecule type" value="Genomic_DNA"/>
</dbReference>
<dbReference type="RefSeq" id="WP_000120494.1">
    <property type="nucleotide sequence ID" value="NC_002758.2"/>
</dbReference>
<dbReference type="SMR" id="P66803"/>
<dbReference type="KEGG" id="sav:SAV2113"/>
<dbReference type="HOGENOM" id="CLU_022477_2_1_9"/>
<dbReference type="PhylomeDB" id="P66803"/>
<dbReference type="UniPathway" id="UPA00193"/>
<dbReference type="UniPathway" id="UPA00288">
    <property type="reaction ID" value="UER01023"/>
</dbReference>
<dbReference type="Proteomes" id="UP000002481">
    <property type="component" value="Chromosome"/>
</dbReference>
<dbReference type="GO" id="GO:0005829">
    <property type="term" value="C:cytosol"/>
    <property type="evidence" value="ECO:0007669"/>
    <property type="project" value="TreeGrafter"/>
</dbReference>
<dbReference type="GO" id="GO:0004372">
    <property type="term" value="F:glycine hydroxymethyltransferase activity"/>
    <property type="evidence" value="ECO:0007669"/>
    <property type="project" value="UniProtKB-UniRule"/>
</dbReference>
<dbReference type="GO" id="GO:0030170">
    <property type="term" value="F:pyridoxal phosphate binding"/>
    <property type="evidence" value="ECO:0007669"/>
    <property type="project" value="UniProtKB-UniRule"/>
</dbReference>
<dbReference type="GO" id="GO:0019264">
    <property type="term" value="P:glycine biosynthetic process from serine"/>
    <property type="evidence" value="ECO:0007669"/>
    <property type="project" value="UniProtKB-UniRule"/>
</dbReference>
<dbReference type="GO" id="GO:0035999">
    <property type="term" value="P:tetrahydrofolate interconversion"/>
    <property type="evidence" value="ECO:0007669"/>
    <property type="project" value="UniProtKB-UniRule"/>
</dbReference>
<dbReference type="CDD" id="cd00378">
    <property type="entry name" value="SHMT"/>
    <property type="match status" value="1"/>
</dbReference>
<dbReference type="FunFam" id="3.40.640.10:FF:000001">
    <property type="entry name" value="Serine hydroxymethyltransferase"/>
    <property type="match status" value="1"/>
</dbReference>
<dbReference type="FunFam" id="3.90.1150.10:FF:000003">
    <property type="entry name" value="Serine hydroxymethyltransferase"/>
    <property type="match status" value="1"/>
</dbReference>
<dbReference type="Gene3D" id="3.90.1150.10">
    <property type="entry name" value="Aspartate Aminotransferase, domain 1"/>
    <property type="match status" value="1"/>
</dbReference>
<dbReference type="Gene3D" id="3.40.640.10">
    <property type="entry name" value="Type I PLP-dependent aspartate aminotransferase-like (Major domain)"/>
    <property type="match status" value="1"/>
</dbReference>
<dbReference type="HAMAP" id="MF_00051">
    <property type="entry name" value="SHMT"/>
    <property type="match status" value="1"/>
</dbReference>
<dbReference type="InterPro" id="IPR015424">
    <property type="entry name" value="PyrdxlP-dep_Trfase"/>
</dbReference>
<dbReference type="InterPro" id="IPR015421">
    <property type="entry name" value="PyrdxlP-dep_Trfase_major"/>
</dbReference>
<dbReference type="InterPro" id="IPR015422">
    <property type="entry name" value="PyrdxlP-dep_Trfase_small"/>
</dbReference>
<dbReference type="InterPro" id="IPR001085">
    <property type="entry name" value="Ser_HO-MeTrfase"/>
</dbReference>
<dbReference type="InterPro" id="IPR049943">
    <property type="entry name" value="Ser_HO-MeTrfase-like"/>
</dbReference>
<dbReference type="InterPro" id="IPR019798">
    <property type="entry name" value="Ser_HO-MeTrfase_PLP_BS"/>
</dbReference>
<dbReference type="InterPro" id="IPR039429">
    <property type="entry name" value="SHMT-like_dom"/>
</dbReference>
<dbReference type="NCBIfam" id="NF000586">
    <property type="entry name" value="PRK00011.1"/>
    <property type="match status" value="1"/>
</dbReference>
<dbReference type="PANTHER" id="PTHR11680">
    <property type="entry name" value="SERINE HYDROXYMETHYLTRANSFERASE"/>
    <property type="match status" value="1"/>
</dbReference>
<dbReference type="PANTHER" id="PTHR11680:SF35">
    <property type="entry name" value="SERINE HYDROXYMETHYLTRANSFERASE 1"/>
    <property type="match status" value="1"/>
</dbReference>
<dbReference type="Pfam" id="PF00464">
    <property type="entry name" value="SHMT"/>
    <property type="match status" value="1"/>
</dbReference>
<dbReference type="PIRSF" id="PIRSF000412">
    <property type="entry name" value="SHMT"/>
    <property type="match status" value="1"/>
</dbReference>
<dbReference type="SUPFAM" id="SSF53383">
    <property type="entry name" value="PLP-dependent transferases"/>
    <property type="match status" value="1"/>
</dbReference>
<dbReference type="PROSITE" id="PS00096">
    <property type="entry name" value="SHMT"/>
    <property type="match status" value="1"/>
</dbReference>
<keyword id="KW-0028">Amino-acid biosynthesis</keyword>
<keyword id="KW-0963">Cytoplasm</keyword>
<keyword id="KW-0554">One-carbon metabolism</keyword>
<keyword id="KW-0663">Pyridoxal phosphate</keyword>
<keyword id="KW-0808">Transferase</keyword>
<protein>
    <recommendedName>
        <fullName evidence="1">Serine hydroxymethyltransferase</fullName>
        <shortName evidence="1">SHMT</shortName>
        <shortName evidence="1">Serine methylase</shortName>
        <ecNumber evidence="1">2.1.2.1</ecNumber>
    </recommendedName>
</protein>
<organism>
    <name type="scientific">Staphylococcus aureus (strain Mu50 / ATCC 700699)</name>
    <dbReference type="NCBI Taxonomy" id="158878"/>
    <lineage>
        <taxon>Bacteria</taxon>
        <taxon>Bacillati</taxon>
        <taxon>Bacillota</taxon>
        <taxon>Bacilli</taxon>
        <taxon>Bacillales</taxon>
        <taxon>Staphylococcaceae</taxon>
        <taxon>Staphylococcus</taxon>
    </lineage>
</organism>
<feature type="chain" id="PRO_0000113662" description="Serine hydroxymethyltransferase">
    <location>
        <begin position="1"/>
        <end position="412"/>
    </location>
</feature>
<feature type="binding site" evidence="1">
    <location>
        <position position="117"/>
    </location>
    <ligand>
        <name>(6S)-5,6,7,8-tetrahydrofolate</name>
        <dbReference type="ChEBI" id="CHEBI:57453"/>
    </ligand>
</feature>
<feature type="binding site" evidence="1">
    <location>
        <begin position="121"/>
        <end position="123"/>
    </location>
    <ligand>
        <name>(6S)-5,6,7,8-tetrahydrofolate</name>
        <dbReference type="ChEBI" id="CHEBI:57453"/>
    </ligand>
</feature>
<feature type="site" description="Plays an important role in substrate specificity" evidence="1">
    <location>
        <position position="225"/>
    </location>
</feature>
<feature type="modified residue" description="N6-(pyridoxal phosphate)lysine" evidence="1">
    <location>
        <position position="226"/>
    </location>
</feature>
<comment type="function">
    <text evidence="1">Catalyzes the reversible interconversion of serine and glycine with tetrahydrofolate (THF) serving as the one-carbon carrier. This reaction serves as the major source of one-carbon groups required for the biosynthesis of purines, thymidylate, methionine, and other important biomolecules. Also exhibits THF-independent aldolase activity toward beta-hydroxyamino acids, producing glycine and aldehydes, via a retro-aldol mechanism.</text>
</comment>
<comment type="catalytic activity">
    <reaction evidence="1">
        <text>(6R)-5,10-methylene-5,6,7,8-tetrahydrofolate + glycine + H2O = (6S)-5,6,7,8-tetrahydrofolate + L-serine</text>
        <dbReference type="Rhea" id="RHEA:15481"/>
        <dbReference type="ChEBI" id="CHEBI:15377"/>
        <dbReference type="ChEBI" id="CHEBI:15636"/>
        <dbReference type="ChEBI" id="CHEBI:33384"/>
        <dbReference type="ChEBI" id="CHEBI:57305"/>
        <dbReference type="ChEBI" id="CHEBI:57453"/>
        <dbReference type="EC" id="2.1.2.1"/>
    </reaction>
</comment>
<comment type="cofactor">
    <cofactor evidence="1">
        <name>pyridoxal 5'-phosphate</name>
        <dbReference type="ChEBI" id="CHEBI:597326"/>
    </cofactor>
</comment>
<comment type="pathway">
    <text evidence="1">One-carbon metabolism; tetrahydrofolate interconversion.</text>
</comment>
<comment type="pathway">
    <text evidence="1">Amino-acid biosynthesis; glycine biosynthesis; glycine from L-serine: step 1/1.</text>
</comment>
<comment type="subunit">
    <text evidence="1">Homodimer.</text>
</comment>
<comment type="subcellular location">
    <subcellularLocation>
        <location evidence="1">Cytoplasm</location>
    </subcellularLocation>
</comment>
<comment type="similarity">
    <text evidence="1">Belongs to the SHMT family.</text>
</comment>
<sequence length="412" mass="45172">MSYITKQDKVIAEAIEREFQRQNSNIELIASENFVSEAVMEAQGSVLTNKYAEGYPGRRYYGGCEFVDVTESIAIDRAKALFGAEHVNVQPHSGSQANMAVYLVALEMGDTVLGMNLSHGGHLTHGAPVNFSGKFYNFVEYGVDKDTERINYDEVRKLALEHKPKLIVAGASAYSRTIDFKKFKEIADEVNAKLMVDMAHIAGLVAAGLHPNPVEYADFVTTTTHKTLRGPRGGMILCKEEYKKDIDKTIFPGIQGGPLEHVIAAKAVAFGEALENNFKTYQQQVVKNAKVLAEALINEGFRIVSGGTDNHLVAVDVKGSIGLTGKEAEETLDSVGITCNKNTIPFDQEKPFVTSGIRLGTPAATTRGFDEKAFEEVAKIISLALKNSKDEEKLQQAKERVAKLTAEYPLYQ</sequence>
<reference key="1">
    <citation type="journal article" date="2001" name="Lancet">
        <title>Whole genome sequencing of meticillin-resistant Staphylococcus aureus.</title>
        <authorList>
            <person name="Kuroda M."/>
            <person name="Ohta T."/>
            <person name="Uchiyama I."/>
            <person name="Baba T."/>
            <person name="Yuzawa H."/>
            <person name="Kobayashi I."/>
            <person name="Cui L."/>
            <person name="Oguchi A."/>
            <person name="Aoki K."/>
            <person name="Nagai Y."/>
            <person name="Lian J.-Q."/>
            <person name="Ito T."/>
            <person name="Kanamori M."/>
            <person name="Matsumaru H."/>
            <person name="Maruyama A."/>
            <person name="Murakami H."/>
            <person name="Hosoyama A."/>
            <person name="Mizutani-Ui Y."/>
            <person name="Takahashi N.K."/>
            <person name="Sawano T."/>
            <person name="Inoue R."/>
            <person name="Kaito C."/>
            <person name="Sekimizu K."/>
            <person name="Hirakawa H."/>
            <person name="Kuhara S."/>
            <person name="Goto S."/>
            <person name="Yabuzaki J."/>
            <person name="Kanehisa M."/>
            <person name="Yamashita A."/>
            <person name="Oshima K."/>
            <person name="Furuya K."/>
            <person name="Yoshino C."/>
            <person name="Shiba T."/>
            <person name="Hattori M."/>
            <person name="Ogasawara N."/>
            <person name="Hayashi H."/>
            <person name="Hiramatsu K."/>
        </authorList>
    </citation>
    <scope>NUCLEOTIDE SEQUENCE [LARGE SCALE GENOMIC DNA]</scope>
    <source>
        <strain>Mu50 / ATCC 700699</strain>
    </source>
</reference>
<gene>
    <name evidence="1" type="primary">glyA</name>
    <name type="ordered locus">SAV2113</name>
</gene>
<proteinExistence type="inferred from homology"/>
<name>GLYA_STAAM</name>